<proteinExistence type="inferred from homology"/>
<dbReference type="EMBL" id="AE000782">
    <property type="protein sequence ID" value="AAB90160.1"/>
    <property type="molecule type" value="Genomic_DNA"/>
</dbReference>
<dbReference type="PIR" id="G69384">
    <property type="entry name" value="G69384"/>
</dbReference>
<dbReference type="STRING" id="224325.AF_1079"/>
<dbReference type="PaxDb" id="224325-AF_1079"/>
<dbReference type="EnsemblBacteria" id="AAB90160">
    <property type="protein sequence ID" value="AAB90160"/>
    <property type="gene ID" value="AF_1079"/>
</dbReference>
<dbReference type="KEGG" id="afu:AF_1079"/>
<dbReference type="HOGENOM" id="CLU_3412276_0_0_2"/>
<dbReference type="PhylomeDB" id="O29184"/>
<dbReference type="Proteomes" id="UP000002199">
    <property type="component" value="Chromosome"/>
</dbReference>
<dbReference type="Gene3D" id="4.10.1150.10">
    <property type="entry name" value="AF2212/PG0164-like"/>
    <property type="match status" value="1"/>
</dbReference>
<dbReference type="InterPro" id="IPR008203">
    <property type="entry name" value="AF2212-like"/>
</dbReference>
<dbReference type="InterPro" id="IPR024069">
    <property type="entry name" value="AF2212-like_dom_sf"/>
</dbReference>
<dbReference type="Pfam" id="PF01954">
    <property type="entry name" value="AF2212-like"/>
    <property type="match status" value="1"/>
</dbReference>
<dbReference type="SUPFAM" id="SSF141694">
    <property type="entry name" value="AF2212/PG0164-like"/>
    <property type="match status" value="1"/>
</dbReference>
<keyword id="KW-1185">Reference proteome</keyword>
<keyword id="KW-1277">Toxin-antitoxin system</keyword>
<organism>
    <name type="scientific">Archaeoglobus fulgidus (strain ATCC 49558 / DSM 4304 / JCM 9628 / NBRC 100126 / VC-16)</name>
    <dbReference type="NCBI Taxonomy" id="224325"/>
    <lineage>
        <taxon>Archaea</taxon>
        <taxon>Methanobacteriati</taxon>
        <taxon>Methanobacteriota</taxon>
        <taxon>Archaeoglobi</taxon>
        <taxon>Archaeoglobales</taxon>
        <taxon>Archaeoglobaceae</taxon>
        <taxon>Archaeoglobus</taxon>
    </lineage>
</organism>
<comment type="function">
    <text evidence="1">Possibly the antitoxin component of a type II toxin-antitoxin (TA) system.</text>
</comment>
<comment type="similarity">
    <text evidence="1">Belongs to the UPF0165 family.</text>
</comment>
<accession>O29184</accession>
<feature type="chain" id="PRO_0000156850" description="Putative antitoxin AF_1079">
    <location>
        <begin position="1"/>
        <end position="28"/>
    </location>
</feature>
<name>Y1079_ARCFU</name>
<reference key="1">
    <citation type="journal article" date="1997" name="Nature">
        <title>The complete genome sequence of the hyperthermophilic, sulphate-reducing archaeon Archaeoglobus fulgidus.</title>
        <authorList>
            <person name="Klenk H.-P."/>
            <person name="Clayton R.A."/>
            <person name="Tomb J.-F."/>
            <person name="White O."/>
            <person name="Nelson K.E."/>
            <person name="Ketchum K.A."/>
            <person name="Dodson R.J."/>
            <person name="Gwinn M.L."/>
            <person name="Hickey E.K."/>
            <person name="Peterson J.D."/>
            <person name="Richardson D.L."/>
            <person name="Kerlavage A.R."/>
            <person name="Graham D.E."/>
            <person name="Kyrpides N.C."/>
            <person name="Fleischmann R.D."/>
            <person name="Quackenbush J."/>
            <person name="Lee N.H."/>
            <person name="Sutton G.G."/>
            <person name="Gill S.R."/>
            <person name="Kirkness E.F."/>
            <person name="Dougherty B.A."/>
            <person name="McKenney K."/>
            <person name="Adams M.D."/>
            <person name="Loftus B.J."/>
            <person name="Peterson S.N."/>
            <person name="Reich C.I."/>
            <person name="McNeil L.K."/>
            <person name="Badger J.H."/>
            <person name="Glodek A."/>
            <person name="Zhou L."/>
            <person name="Overbeek R."/>
            <person name="Gocayne J.D."/>
            <person name="Weidman J.F."/>
            <person name="McDonald L.A."/>
            <person name="Utterback T.R."/>
            <person name="Cotton M.D."/>
            <person name="Spriggs T."/>
            <person name="Artiach P."/>
            <person name="Kaine B.P."/>
            <person name="Sykes S.M."/>
            <person name="Sadow P.W."/>
            <person name="D'Andrea K.P."/>
            <person name="Bowman C."/>
            <person name="Fujii C."/>
            <person name="Garland S.A."/>
            <person name="Mason T.M."/>
            <person name="Olsen G.J."/>
            <person name="Fraser C.M."/>
            <person name="Smith H.O."/>
            <person name="Woese C.R."/>
            <person name="Venter J.C."/>
        </authorList>
    </citation>
    <scope>NUCLEOTIDE SEQUENCE [LARGE SCALE GENOMIC DNA]</scope>
    <source>
        <strain>ATCC 49558 / DSM 4304 / JCM 9628 / NBRC 100126 / VC-16</strain>
    </source>
</reference>
<evidence type="ECO:0000305" key="1"/>
<protein>
    <recommendedName>
        <fullName>Putative antitoxin AF_1079</fullName>
    </recommendedName>
</protein>
<gene>
    <name type="ordered locus">AF_1079</name>
</gene>
<sequence>MPKIIEAVYENGVFKPLQKVDLREGERE</sequence>